<accession>Q47G56</accession>
<feature type="chain" id="PRO_0000223411" description="Urease accessory protein UreE">
    <location>
        <begin position="1"/>
        <end position="175"/>
    </location>
</feature>
<feature type="region of interest" description="Disordered" evidence="2">
    <location>
        <begin position="134"/>
        <end position="175"/>
    </location>
</feature>
<comment type="function">
    <text evidence="1">Involved in urease metallocenter assembly. Binds nickel. Probably functions as a nickel donor during metallocenter assembly.</text>
</comment>
<comment type="subcellular location">
    <subcellularLocation>
        <location evidence="1">Cytoplasm</location>
    </subcellularLocation>
</comment>
<comment type="similarity">
    <text evidence="1">Belongs to the UreE family.</text>
</comment>
<protein>
    <recommendedName>
        <fullName evidence="1">Urease accessory protein UreE</fullName>
    </recommendedName>
</protein>
<name>UREE_DECAR</name>
<keyword id="KW-0143">Chaperone</keyword>
<keyword id="KW-0963">Cytoplasm</keyword>
<keyword id="KW-0533">Nickel</keyword>
<keyword id="KW-0996">Nickel insertion</keyword>
<proteinExistence type="inferred from homology"/>
<dbReference type="EMBL" id="CP000089">
    <property type="protein sequence ID" value="AAZ46175.1"/>
    <property type="molecule type" value="Genomic_DNA"/>
</dbReference>
<dbReference type="SMR" id="Q47G56"/>
<dbReference type="STRING" id="159087.Daro_1426"/>
<dbReference type="KEGG" id="dar:Daro_1426"/>
<dbReference type="eggNOG" id="COG2371">
    <property type="taxonomic scope" value="Bacteria"/>
</dbReference>
<dbReference type="HOGENOM" id="CLU_093757_2_0_4"/>
<dbReference type="OrthoDB" id="5421304at2"/>
<dbReference type="GO" id="GO:0005737">
    <property type="term" value="C:cytoplasm"/>
    <property type="evidence" value="ECO:0007669"/>
    <property type="project" value="UniProtKB-SubCell"/>
</dbReference>
<dbReference type="GO" id="GO:0016151">
    <property type="term" value="F:nickel cation binding"/>
    <property type="evidence" value="ECO:0007669"/>
    <property type="project" value="UniProtKB-UniRule"/>
</dbReference>
<dbReference type="GO" id="GO:0051082">
    <property type="term" value="F:unfolded protein binding"/>
    <property type="evidence" value="ECO:0007669"/>
    <property type="project" value="UniProtKB-UniRule"/>
</dbReference>
<dbReference type="GO" id="GO:0006457">
    <property type="term" value="P:protein folding"/>
    <property type="evidence" value="ECO:0007669"/>
    <property type="project" value="InterPro"/>
</dbReference>
<dbReference type="GO" id="GO:0065003">
    <property type="term" value="P:protein-containing complex assembly"/>
    <property type="evidence" value="ECO:0007669"/>
    <property type="project" value="InterPro"/>
</dbReference>
<dbReference type="GO" id="GO:0019627">
    <property type="term" value="P:urea metabolic process"/>
    <property type="evidence" value="ECO:0007669"/>
    <property type="project" value="InterPro"/>
</dbReference>
<dbReference type="CDD" id="cd00571">
    <property type="entry name" value="UreE"/>
    <property type="match status" value="1"/>
</dbReference>
<dbReference type="Gene3D" id="2.60.260.20">
    <property type="entry name" value="Urease metallochaperone UreE, N-terminal domain"/>
    <property type="match status" value="1"/>
</dbReference>
<dbReference type="Gene3D" id="3.30.70.790">
    <property type="entry name" value="UreE, C-terminal domain"/>
    <property type="match status" value="1"/>
</dbReference>
<dbReference type="HAMAP" id="MF_00822">
    <property type="entry name" value="UreE"/>
    <property type="match status" value="1"/>
</dbReference>
<dbReference type="InterPro" id="IPR012406">
    <property type="entry name" value="UreE"/>
</dbReference>
<dbReference type="InterPro" id="IPR007864">
    <property type="entry name" value="UreE_C_dom"/>
</dbReference>
<dbReference type="InterPro" id="IPR004029">
    <property type="entry name" value="UreE_N"/>
</dbReference>
<dbReference type="InterPro" id="IPR036118">
    <property type="entry name" value="UreE_N_sf"/>
</dbReference>
<dbReference type="NCBIfam" id="NF009751">
    <property type="entry name" value="PRK13261.1-1"/>
    <property type="match status" value="1"/>
</dbReference>
<dbReference type="Pfam" id="PF05194">
    <property type="entry name" value="UreE_C"/>
    <property type="match status" value="1"/>
</dbReference>
<dbReference type="Pfam" id="PF02814">
    <property type="entry name" value="UreE_N"/>
    <property type="match status" value="1"/>
</dbReference>
<dbReference type="PIRSF" id="PIRSF036402">
    <property type="entry name" value="Ureas_acces_UreE"/>
    <property type="match status" value="1"/>
</dbReference>
<dbReference type="SMART" id="SM00988">
    <property type="entry name" value="UreE_N"/>
    <property type="match status" value="1"/>
</dbReference>
<dbReference type="SUPFAM" id="SSF69737">
    <property type="entry name" value="Urease metallochaperone UreE, C-terminal domain"/>
    <property type="match status" value="1"/>
</dbReference>
<dbReference type="SUPFAM" id="SSF69287">
    <property type="entry name" value="Urease metallochaperone UreE, N-terminal domain"/>
    <property type="match status" value="1"/>
</dbReference>
<reference key="1">
    <citation type="journal article" date="2009" name="BMC Genomics">
        <title>Metabolic analysis of the soil microbe Dechloromonas aromatica str. RCB: indications of a surprisingly complex life-style and cryptic anaerobic pathways for aromatic degradation.</title>
        <authorList>
            <person name="Salinero K.K."/>
            <person name="Keller K."/>
            <person name="Feil W.S."/>
            <person name="Feil H."/>
            <person name="Trong S."/>
            <person name="Di Bartolo G."/>
            <person name="Lapidus A."/>
        </authorList>
    </citation>
    <scope>NUCLEOTIDE SEQUENCE [LARGE SCALE GENOMIC DNA]</scope>
    <source>
        <strain>RCB</strain>
    </source>
</reference>
<evidence type="ECO:0000255" key="1">
    <source>
        <dbReference type="HAMAP-Rule" id="MF_00822"/>
    </source>
</evidence>
<evidence type="ECO:0000256" key="2">
    <source>
        <dbReference type="SAM" id="MobiDB-lite"/>
    </source>
</evidence>
<gene>
    <name evidence="1" type="primary">ureE</name>
    <name type="ordered locus">Daro_1426</name>
</gene>
<organism>
    <name type="scientific">Dechloromonas aromatica (strain RCB)</name>
    <dbReference type="NCBI Taxonomy" id="159087"/>
    <lineage>
        <taxon>Bacteria</taxon>
        <taxon>Pseudomonadati</taxon>
        <taxon>Pseudomonadota</taxon>
        <taxon>Betaproteobacteria</taxon>
        <taxon>Rhodocyclales</taxon>
        <taxon>Azonexaceae</taxon>
        <taxon>Dechloromonas</taxon>
    </lineage>
</organism>
<sequence length="175" mass="18826">MLILNQRTQQLATDSVALAYDERKRSRLKVTLASGAEAGIFLERGDHLHGGDKLAAEDGSAVVEILAAPEKLIEAIADSPLLFARAAYHLGNRHVPVQILPTENGGKLRFQTDHVLAEMVRGLGCSVSDAEAPFQPESGAYGGGHHHGDESATDLHNPGHGPHRSVPKIHEFKPR</sequence>